<feature type="chain" id="PRO_0000412789" description="Ribose 1,5-bisphosphate phosphokinase PhnN">
    <location>
        <begin position="1"/>
        <end position="410"/>
    </location>
</feature>
<feature type="region of interest" description="unknown">
    <location>
        <begin position="1"/>
        <end position="220"/>
    </location>
</feature>
<feature type="region of interest" description="Ribose 1,5-bisphosphokinase">
    <location>
        <begin position="221"/>
        <end position="410"/>
    </location>
</feature>
<feature type="binding site" evidence="1">
    <location>
        <begin position="233"/>
        <end position="240"/>
    </location>
    <ligand>
        <name>ATP</name>
        <dbReference type="ChEBI" id="CHEBI:30616"/>
    </ligand>
</feature>
<organism>
    <name type="scientific">Laribacter hongkongensis (strain HLHK9)</name>
    <dbReference type="NCBI Taxonomy" id="557598"/>
    <lineage>
        <taxon>Bacteria</taxon>
        <taxon>Pseudomonadati</taxon>
        <taxon>Pseudomonadota</taxon>
        <taxon>Betaproteobacteria</taxon>
        <taxon>Neisseriales</taxon>
        <taxon>Aquaspirillaceae</taxon>
        <taxon>Laribacter</taxon>
    </lineage>
</organism>
<proteinExistence type="inferred from homology"/>
<protein>
    <recommendedName>
        <fullName>Ribose 1,5-bisphosphate phosphokinase PhnN</fullName>
        <ecNumber>2.7.4.23</ecNumber>
    </recommendedName>
    <alternativeName>
        <fullName>Ribose 1,5-bisphosphokinase</fullName>
    </alternativeName>
</protein>
<name>PHNN_LARHH</name>
<gene>
    <name type="primary">phnN</name>
    <name type="ordered locus">LHK_01589</name>
</gene>
<comment type="function">
    <text evidence="1">Catalyzes the phosphorylation of ribose 1,5-bisphosphate to 5-phospho-D-ribosyl alpha-1-diphosphate (PRPP).</text>
</comment>
<comment type="catalytic activity">
    <reaction>
        <text>alpha-D-ribose 1,5-bisphosphate + ATP = 5-phospho-alpha-D-ribose 1-diphosphate + ADP</text>
        <dbReference type="Rhea" id="RHEA:20109"/>
        <dbReference type="ChEBI" id="CHEBI:30616"/>
        <dbReference type="ChEBI" id="CHEBI:58017"/>
        <dbReference type="ChEBI" id="CHEBI:68688"/>
        <dbReference type="ChEBI" id="CHEBI:456216"/>
        <dbReference type="EC" id="2.7.4.23"/>
    </reaction>
</comment>
<comment type="pathway">
    <text>Metabolic intermediate biosynthesis; 5-phospho-alpha-D-ribose 1-diphosphate biosynthesis; 5-phospho-alpha-D-ribose 1-diphosphate from D-ribose 5-phosphate (route II): step 3/3.</text>
</comment>
<comment type="similarity">
    <text evidence="2">In the C-terminal section; belongs to the ribose 1,5-bisphosphokinase family.</text>
</comment>
<sequence>MRYAVYLAPPPASRFWQLGSAWLGRDAWLNRPVALPSGWSAADADRVAAAARYGWHATLRAPFALAEGASEAAVHATLRTLARRFATFGLTLAPATLNGFAALRPVSGQSQVAELATAALLALDALAAPAPLRTGLSAREAELCRRWGYPYVFECYRCHFTLTSQLDEVDIPSWLARAAAHFDGALYQPVEGLALFVEPEAGAAFRLCRLVWLLMAGSTSMRTETGQLIYVMGPSGAGKDSLLGYARERLAGQPLVFAHRYITRPATAGSENHVALSEAEFALREAHGCFALSWRRNGLAYGLGCEVTDWLAAGLVVVVNGSRAALPQARQCFPGLKPLWITASPAVLAARLAARGRESADDIAARLAASAGFRPPADCRVLCNDGELAVAGDELVAWLSSHCHQPITAL</sequence>
<keyword id="KW-0067">ATP-binding</keyword>
<keyword id="KW-0547">Nucleotide-binding</keyword>
<keyword id="KW-1185">Reference proteome</keyword>
<keyword id="KW-0808">Transferase</keyword>
<dbReference type="EC" id="2.7.4.23"/>
<dbReference type="EMBL" id="CP001154">
    <property type="protein sequence ID" value="ACO74575.1"/>
    <property type="molecule type" value="Genomic_DNA"/>
</dbReference>
<dbReference type="RefSeq" id="WP_012697061.1">
    <property type="nucleotide sequence ID" value="NC_012559.1"/>
</dbReference>
<dbReference type="SMR" id="C1D7Y5"/>
<dbReference type="STRING" id="557598.LHK_01589"/>
<dbReference type="KEGG" id="lhk:LHK_01589"/>
<dbReference type="eggNOG" id="COG3709">
    <property type="taxonomic scope" value="Bacteria"/>
</dbReference>
<dbReference type="HOGENOM" id="CLU_603790_0_0_4"/>
<dbReference type="UniPathway" id="UPA00087">
    <property type="reaction ID" value="UER00175"/>
</dbReference>
<dbReference type="Proteomes" id="UP000002010">
    <property type="component" value="Chromosome"/>
</dbReference>
<dbReference type="GO" id="GO:0005524">
    <property type="term" value="F:ATP binding"/>
    <property type="evidence" value="ECO:0007669"/>
    <property type="project" value="UniProtKB-KW"/>
</dbReference>
<dbReference type="GO" id="GO:0033863">
    <property type="term" value="F:ribose 1,5-bisphosphate phosphokinase activity"/>
    <property type="evidence" value="ECO:0007669"/>
    <property type="project" value="UniProtKB-UniRule"/>
</dbReference>
<dbReference type="GO" id="GO:0006015">
    <property type="term" value="P:5-phosphoribose 1-diphosphate biosynthetic process"/>
    <property type="evidence" value="ECO:0007669"/>
    <property type="project" value="UniProtKB-UniRule"/>
</dbReference>
<dbReference type="GO" id="GO:0019634">
    <property type="term" value="P:organic phosphonate metabolic process"/>
    <property type="evidence" value="ECO:0007669"/>
    <property type="project" value="UniProtKB-UniRule"/>
</dbReference>
<dbReference type="Gene3D" id="3.40.50.300">
    <property type="entry name" value="P-loop containing nucleotide triphosphate hydrolases"/>
    <property type="match status" value="1"/>
</dbReference>
<dbReference type="HAMAP" id="MF_00836">
    <property type="entry name" value="PhnN"/>
    <property type="match status" value="1"/>
</dbReference>
<dbReference type="InterPro" id="IPR009389">
    <property type="entry name" value="DUF1045"/>
</dbReference>
<dbReference type="InterPro" id="IPR008145">
    <property type="entry name" value="GK/Ca_channel_bsu"/>
</dbReference>
<dbReference type="InterPro" id="IPR027417">
    <property type="entry name" value="P-loop_NTPase"/>
</dbReference>
<dbReference type="InterPro" id="IPR012699">
    <property type="entry name" value="PhnN"/>
</dbReference>
<dbReference type="NCBIfam" id="TIGR02322">
    <property type="entry name" value="phosphon_PhnN"/>
    <property type="match status" value="1"/>
</dbReference>
<dbReference type="NCBIfam" id="NF007485">
    <property type="entry name" value="PRK10078.1"/>
    <property type="match status" value="1"/>
</dbReference>
<dbReference type="Pfam" id="PF06299">
    <property type="entry name" value="DUF1045"/>
    <property type="match status" value="1"/>
</dbReference>
<dbReference type="SMART" id="SM00072">
    <property type="entry name" value="GuKc"/>
    <property type="match status" value="1"/>
</dbReference>
<dbReference type="SUPFAM" id="SSF52540">
    <property type="entry name" value="P-loop containing nucleoside triphosphate hydrolases"/>
    <property type="match status" value="1"/>
</dbReference>
<evidence type="ECO:0000250" key="1"/>
<evidence type="ECO:0000305" key="2"/>
<accession>C1D7Y5</accession>
<reference key="1">
    <citation type="journal article" date="2009" name="PLoS Genet.">
        <title>The complete genome and proteome of Laribacter hongkongensis reveal potential mechanisms for adaptations to different temperatures and habitats.</title>
        <authorList>
            <person name="Woo P.C.Y."/>
            <person name="Lau S.K.P."/>
            <person name="Tse H."/>
            <person name="Teng J.L.L."/>
            <person name="Curreem S.O."/>
            <person name="Tsang A.K.L."/>
            <person name="Fan R.Y.Y."/>
            <person name="Wong G.K.M."/>
            <person name="Huang Y."/>
            <person name="Loman N.J."/>
            <person name="Snyder L.A.S."/>
            <person name="Cai J.J."/>
            <person name="Huang J.-D."/>
            <person name="Mak W."/>
            <person name="Pallen M.J."/>
            <person name="Lok S."/>
            <person name="Yuen K.-Y."/>
        </authorList>
    </citation>
    <scope>NUCLEOTIDE SEQUENCE [LARGE SCALE GENOMIC DNA]</scope>
    <source>
        <strain>HLHK9</strain>
    </source>
</reference>